<protein>
    <recommendedName>
        <fullName>ATP-dependent RNA helicase MRH4, mitochondrial</fullName>
        <ecNumber>3.6.4.13</ecNumber>
    </recommendedName>
</protein>
<name>MRH4_PYRO7</name>
<proteinExistence type="inferred from homology"/>
<feature type="transit peptide" description="Mitochondrion" evidence="2">
    <location>
        <begin position="1"/>
        <end position="61"/>
    </location>
</feature>
<feature type="chain" id="PRO_0000294674" description="ATP-dependent RNA helicase MRH4, mitochondrial">
    <location>
        <begin position="62"/>
        <end position="651"/>
    </location>
</feature>
<feature type="domain" description="Helicase ATP-binding" evidence="3">
    <location>
        <begin position="234"/>
        <end position="445"/>
    </location>
</feature>
<feature type="domain" description="Helicase C-terminal" evidence="4">
    <location>
        <begin position="494"/>
        <end position="651"/>
    </location>
</feature>
<feature type="region of interest" description="Disordered" evidence="5">
    <location>
        <begin position="45"/>
        <end position="137"/>
    </location>
</feature>
<feature type="region of interest" description="Disordered" evidence="5">
    <location>
        <begin position="210"/>
        <end position="241"/>
    </location>
</feature>
<feature type="short sequence motif" description="Q motif">
    <location>
        <begin position="167"/>
        <end position="200"/>
    </location>
</feature>
<feature type="short sequence motif" description="DEAD box">
    <location>
        <begin position="392"/>
        <end position="395"/>
    </location>
</feature>
<feature type="compositionally biased region" description="Polar residues" evidence="5">
    <location>
        <begin position="45"/>
        <end position="56"/>
    </location>
</feature>
<feature type="compositionally biased region" description="Basic and acidic residues" evidence="5">
    <location>
        <begin position="72"/>
        <end position="83"/>
    </location>
</feature>
<feature type="compositionally biased region" description="Basic and acidic residues" evidence="5">
    <location>
        <begin position="124"/>
        <end position="137"/>
    </location>
</feature>
<feature type="compositionally biased region" description="Low complexity" evidence="5">
    <location>
        <begin position="224"/>
        <end position="233"/>
    </location>
</feature>
<feature type="binding site" evidence="3">
    <location>
        <begin position="247"/>
        <end position="254"/>
    </location>
    <ligand>
        <name>ATP</name>
        <dbReference type="ChEBI" id="CHEBI:30616"/>
    </ligand>
</feature>
<keyword id="KW-0067">ATP-binding</keyword>
<keyword id="KW-0347">Helicase</keyword>
<keyword id="KW-0378">Hydrolase</keyword>
<keyword id="KW-0496">Mitochondrion</keyword>
<keyword id="KW-0547">Nucleotide-binding</keyword>
<keyword id="KW-1185">Reference proteome</keyword>
<keyword id="KW-0694">RNA-binding</keyword>
<keyword id="KW-0809">Transit peptide</keyword>
<sequence length="651" mass="71018">MLRSSLGSVCLACRISGNAGAAPGAVAYRPQLSTAIRGSTIQLQSSLSFSTSNARQATRRERTPSRMVLSDRVGRSTARDGDKKPRRRVDGPFAGMNRTVANFDPETRSKLSRDNSNNNRSSKNGREGGKKLGRDGKGFKALNMQRSLASIGYGHRTTVKAKMQEVDSFDQFDLLPQVKDAVLNEALKGMLDIKPTPVQRLAIPALLGQTTGARSRWRTKSKPADSGSEAASPDAPPPPREEFLLAAETGSGKTLAYLVPAFNALKEAEASDPDIIAYNQRRAEERALLAKNPGSKIKTRPEPHPTMSRPRVVILVPTAELVDQVGRVAKSLSHVAKARTRMISANMSATMIENDVFSPAGIDILISTPHLLASIAESHPNILSRVSHLVVDEADSLLDRSFSEVTTPIIDRALPSIRQLVLCSATIPRRLDNYLASRFPNMRRITTPNLHAIPRRVQLGVIDVARDPYRGNKNIACADAIWSIGKEAGRHEGPVKGQVDVRRIMVFVNEREKTQEVAEYLKSKGIDAVALHRDTSEERQSEMLASFTSNETMSIPTPEGGVAGSPRSSRTLPNTKVIVATDLASRGIDTLAVRHVVLYDVPHTTIDFIHRLGRAGRMGRRGRGIVLVGNDDRKDIVAEVKESMFMGQALV</sequence>
<accession>A4QTC6</accession>
<accession>G4N4G3</accession>
<comment type="function">
    <text evidence="1">ATP-binding RNA helicase involved in mitochondrial RNA metabolism. Required for maintenance of mitochondrial DNA (By similarity).</text>
</comment>
<comment type="catalytic activity">
    <reaction>
        <text>ATP + H2O = ADP + phosphate + H(+)</text>
        <dbReference type="Rhea" id="RHEA:13065"/>
        <dbReference type="ChEBI" id="CHEBI:15377"/>
        <dbReference type="ChEBI" id="CHEBI:15378"/>
        <dbReference type="ChEBI" id="CHEBI:30616"/>
        <dbReference type="ChEBI" id="CHEBI:43474"/>
        <dbReference type="ChEBI" id="CHEBI:456216"/>
        <dbReference type="EC" id="3.6.4.13"/>
    </reaction>
</comment>
<comment type="subcellular location">
    <subcellularLocation>
        <location evidence="1">Mitochondrion</location>
    </subcellularLocation>
</comment>
<comment type="domain">
    <text>The Q motif is unique to and characteristic of the DEAD box family of RNA helicases and controls ATP binding and hydrolysis.</text>
</comment>
<comment type="similarity">
    <text evidence="6">Belongs to the DEAD box helicase family. MRH4 subfamily.</text>
</comment>
<reference key="1">
    <citation type="journal article" date="2005" name="Nature">
        <title>The genome sequence of the rice blast fungus Magnaporthe grisea.</title>
        <authorList>
            <person name="Dean R.A."/>
            <person name="Talbot N.J."/>
            <person name="Ebbole D.J."/>
            <person name="Farman M.L."/>
            <person name="Mitchell T.K."/>
            <person name="Orbach M.J."/>
            <person name="Thon M.R."/>
            <person name="Kulkarni R."/>
            <person name="Xu J.-R."/>
            <person name="Pan H."/>
            <person name="Read N.D."/>
            <person name="Lee Y.-H."/>
            <person name="Carbone I."/>
            <person name="Brown D."/>
            <person name="Oh Y.Y."/>
            <person name="Donofrio N."/>
            <person name="Jeong J.S."/>
            <person name="Soanes D.M."/>
            <person name="Djonovic S."/>
            <person name="Kolomiets E."/>
            <person name="Rehmeyer C."/>
            <person name="Li W."/>
            <person name="Harding M."/>
            <person name="Kim S."/>
            <person name="Lebrun M.-H."/>
            <person name="Bohnert H."/>
            <person name="Coughlan S."/>
            <person name="Butler J."/>
            <person name="Calvo S.E."/>
            <person name="Ma L.-J."/>
            <person name="Nicol R."/>
            <person name="Purcell S."/>
            <person name="Nusbaum C."/>
            <person name="Galagan J.E."/>
            <person name="Birren B.W."/>
        </authorList>
    </citation>
    <scope>NUCLEOTIDE SEQUENCE [LARGE SCALE GENOMIC DNA]</scope>
    <source>
        <strain>70-15 / ATCC MYA-4617 / FGSC 8958</strain>
    </source>
</reference>
<organism>
    <name type="scientific">Pyricularia oryzae (strain 70-15 / ATCC MYA-4617 / FGSC 8958)</name>
    <name type="common">Rice blast fungus</name>
    <name type="synonym">Magnaporthe oryzae</name>
    <dbReference type="NCBI Taxonomy" id="242507"/>
    <lineage>
        <taxon>Eukaryota</taxon>
        <taxon>Fungi</taxon>
        <taxon>Dikarya</taxon>
        <taxon>Ascomycota</taxon>
        <taxon>Pezizomycotina</taxon>
        <taxon>Sordariomycetes</taxon>
        <taxon>Sordariomycetidae</taxon>
        <taxon>Magnaporthales</taxon>
        <taxon>Pyriculariaceae</taxon>
        <taxon>Pyricularia</taxon>
    </lineage>
</organism>
<gene>
    <name type="primary">MRH4</name>
    <name type="ORF">MGG_05112</name>
</gene>
<evidence type="ECO:0000250" key="1"/>
<evidence type="ECO:0000255" key="2"/>
<evidence type="ECO:0000255" key="3">
    <source>
        <dbReference type="PROSITE-ProRule" id="PRU00541"/>
    </source>
</evidence>
<evidence type="ECO:0000255" key="4">
    <source>
        <dbReference type="PROSITE-ProRule" id="PRU00542"/>
    </source>
</evidence>
<evidence type="ECO:0000256" key="5">
    <source>
        <dbReference type="SAM" id="MobiDB-lite"/>
    </source>
</evidence>
<evidence type="ECO:0000305" key="6"/>
<dbReference type="EC" id="3.6.4.13"/>
<dbReference type="EMBL" id="CM001233">
    <property type="protein sequence ID" value="EHA52831.1"/>
    <property type="molecule type" value="Genomic_DNA"/>
</dbReference>
<dbReference type="RefSeq" id="XP_003712638.1">
    <property type="nucleotide sequence ID" value="XM_003712590.1"/>
</dbReference>
<dbReference type="SMR" id="A4QTC6"/>
<dbReference type="FunCoup" id="A4QTC6">
    <property type="interactions" value="107"/>
</dbReference>
<dbReference type="STRING" id="242507.A4QTC6"/>
<dbReference type="EnsemblFungi" id="MGG_05112T0">
    <property type="protein sequence ID" value="MGG_05112T0"/>
    <property type="gene ID" value="MGG_05112"/>
</dbReference>
<dbReference type="GeneID" id="2675568"/>
<dbReference type="KEGG" id="mgr:MGG_05112"/>
<dbReference type="VEuPathDB" id="FungiDB:MGG_05112"/>
<dbReference type="eggNOG" id="KOG0335">
    <property type="taxonomic scope" value="Eukaryota"/>
</dbReference>
<dbReference type="HOGENOM" id="CLU_003041_18_0_1"/>
<dbReference type="InParanoid" id="A4QTC6"/>
<dbReference type="OMA" id="HSTIDFI"/>
<dbReference type="OrthoDB" id="10256233at2759"/>
<dbReference type="Proteomes" id="UP000009058">
    <property type="component" value="Chromosome 3"/>
</dbReference>
<dbReference type="GO" id="GO:0005739">
    <property type="term" value="C:mitochondrion"/>
    <property type="evidence" value="ECO:0007669"/>
    <property type="project" value="UniProtKB-SubCell"/>
</dbReference>
<dbReference type="GO" id="GO:0005524">
    <property type="term" value="F:ATP binding"/>
    <property type="evidence" value="ECO:0007669"/>
    <property type="project" value="UniProtKB-KW"/>
</dbReference>
<dbReference type="GO" id="GO:0016887">
    <property type="term" value="F:ATP hydrolysis activity"/>
    <property type="evidence" value="ECO:0007669"/>
    <property type="project" value="RHEA"/>
</dbReference>
<dbReference type="GO" id="GO:0003723">
    <property type="term" value="F:RNA binding"/>
    <property type="evidence" value="ECO:0007669"/>
    <property type="project" value="UniProtKB-KW"/>
</dbReference>
<dbReference type="GO" id="GO:0003724">
    <property type="term" value="F:RNA helicase activity"/>
    <property type="evidence" value="ECO:0007669"/>
    <property type="project" value="UniProtKB-EC"/>
</dbReference>
<dbReference type="Gene3D" id="3.40.50.300">
    <property type="entry name" value="P-loop containing nucleotide triphosphate hydrolases"/>
    <property type="match status" value="2"/>
</dbReference>
<dbReference type="InterPro" id="IPR011545">
    <property type="entry name" value="DEAD/DEAH_box_helicase_dom"/>
</dbReference>
<dbReference type="InterPro" id="IPR014001">
    <property type="entry name" value="Helicase_ATP-bd"/>
</dbReference>
<dbReference type="InterPro" id="IPR001650">
    <property type="entry name" value="Helicase_C-like"/>
</dbReference>
<dbReference type="InterPro" id="IPR027417">
    <property type="entry name" value="P-loop_NTPase"/>
</dbReference>
<dbReference type="PANTHER" id="PTHR47960">
    <property type="entry name" value="DEAD-BOX ATP-DEPENDENT RNA HELICASE 50"/>
    <property type="match status" value="1"/>
</dbReference>
<dbReference type="Pfam" id="PF00270">
    <property type="entry name" value="DEAD"/>
    <property type="match status" value="1"/>
</dbReference>
<dbReference type="Pfam" id="PF00271">
    <property type="entry name" value="Helicase_C"/>
    <property type="match status" value="1"/>
</dbReference>
<dbReference type="SMART" id="SM00487">
    <property type="entry name" value="DEXDc"/>
    <property type="match status" value="1"/>
</dbReference>
<dbReference type="SMART" id="SM00490">
    <property type="entry name" value="HELICc"/>
    <property type="match status" value="1"/>
</dbReference>
<dbReference type="SUPFAM" id="SSF52540">
    <property type="entry name" value="P-loop containing nucleoside triphosphate hydrolases"/>
    <property type="match status" value="1"/>
</dbReference>
<dbReference type="PROSITE" id="PS51192">
    <property type="entry name" value="HELICASE_ATP_BIND_1"/>
    <property type="match status" value="1"/>
</dbReference>
<dbReference type="PROSITE" id="PS51194">
    <property type="entry name" value="HELICASE_CTER"/>
    <property type="match status" value="1"/>
</dbReference>
<dbReference type="PROSITE" id="PS51195">
    <property type="entry name" value="Q_MOTIF"/>
    <property type="match status" value="1"/>
</dbReference>